<organism>
    <name type="scientific">Mus musculus</name>
    <name type="common">Mouse</name>
    <dbReference type="NCBI Taxonomy" id="10090"/>
    <lineage>
        <taxon>Eukaryota</taxon>
        <taxon>Metazoa</taxon>
        <taxon>Chordata</taxon>
        <taxon>Craniata</taxon>
        <taxon>Vertebrata</taxon>
        <taxon>Euteleostomi</taxon>
        <taxon>Mammalia</taxon>
        <taxon>Eutheria</taxon>
        <taxon>Euarchontoglires</taxon>
        <taxon>Glires</taxon>
        <taxon>Rodentia</taxon>
        <taxon>Myomorpha</taxon>
        <taxon>Muroidea</taxon>
        <taxon>Muridae</taxon>
        <taxon>Murinae</taxon>
        <taxon>Mus</taxon>
        <taxon>Mus</taxon>
    </lineage>
</organism>
<protein>
    <recommendedName>
        <fullName>Substance-P receptor</fullName>
        <shortName>SPR</shortName>
    </recommendedName>
    <alternativeName>
        <fullName>NK-1 receptor</fullName>
        <shortName>NK-1R</shortName>
    </alternativeName>
    <alternativeName>
        <fullName>Tachykinin receptor 1</fullName>
    </alternativeName>
</protein>
<sequence>MDNVLPVDSDLFPNTSTNTSESNQFVQPTWQIVLWAAAYTVIVVTSVVGNVVVIWIILAHKRMRTVTNYFLVNLAFAEACMAAFNTVVNFTYAVHNVWYYGLFYCKFHNFFPIAALFASIYSMTAVAFDRYMAIIHPLQPRLSATATKVVIFVIWVLALLLAFPQGYYSTTETMPSRVVCMIEWPEHPNRTYEKAYHICVTVLIYFLPLLVIGYAYTVVGITLWASEIPGDSSDRYHEQVSAKRKVVKMMIVVVCTFAICWLPFHIFFLLPYINPDLYLKKFIQQVYLASMWLAMSSTMYNPIIYCCLNDRFRLGFKHAFRCCPFISAGDYEGLEMKSTRYLQTQSSVYKVSRLETTISTVVGAHEDEPEEGPKATPSSLDLTSNGSSRSNSKTMTESSSFYSNMLA</sequence>
<comment type="function">
    <text>This is a receptor for the tachykinin neuropeptide substance P. It is probably associated with G proteins that activate a phosphatidylinositol-calcium second messenger system. The rank order of affinity of this receptor to tachykinins is: substance P &gt; substance K &gt; neuromedin K.</text>
</comment>
<comment type="subunit">
    <text evidence="1">Interacts with ARRB1.</text>
</comment>
<comment type="subcellular location">
    <subcellularLocation>
        <location>Cell membrane</location>
        <topology>Multi-pass membrane protein</topology>
    </subcellularLocation>
</comment>
<comment type="similarity">
    <text evidence="3">Belongs to the G-protein coupled receptor 1 family.</text>
</comment>
<accession>P30548</accession>
<accession>Q8BYR7</accession>
<gene>
    <name type="primary">Tacr1</name>
    <name type="synonym">Tac1r</name>
</gene>
<keyword id="KW-1003">Cell membrane</keyword>
<keyword id="KW-1015">Disulfide bond</keyword>
<keyword id="KW-0297">G-protein coupled receptor</keyword>
<keyword id="KW-0325">Glycoprotein</keyword>
<keyword id="KW-0449">Lipoprotein</keyword>
<keyword id="KW-0472">Membrane</keyword>
<keyword id="KW-0564">Palmitate</keyword>
<keyword id="KW-0675">Receptor</keyword>
<keyword id="KW-1185">Reference proteome</keyword>
<keyword id="KW-0807">Transducer</keyword>
<keyword id="KW-0812">Transmembrane</keyword>
<keyword id="KW-1133">Transmembrane helix</keyword>
<reference key="1">
    <citation type="journal article" date="1992" name="Eur. J. Biochem.">
        <title>Molecular cloning of the murine substance K and substance P receptor genes.</title>
        <authorList>
            <person name="Sundelin J.B."/>
            <person name="Provvedini D.M."/>
            <person name="Wahlestedt C.R."/>
            <person name="Laurell H."/>
            <person name="Pohl J.S."/>
            <person name="Peterson P.A."/>
        </authorList>
    </citation>
    <scope>NUCLEOTIDE SEQUENCE [MRNA]</scope>
    <source>
        <tissue>Intestine</tissue>
    </source>
</reference>
<reference key="2">
    <citation type="journal article" date="2005" name="Science">
        <title>The transcriptional landscape of the mammalian genome.</title>
        <authorList>
            <person name="Carninci P."/>
            <person name="Kasukawa T."/>
            <person name="Katayama S."/>
            <person name="Gough J."/>
            <person name="Frith M.C."/>
            <person name="Maeda N."/>
            <person name="Oyama R."/>
            <person name="Ravasi T."/>
            <person name="Lenhard B."/>
            <person name="Wells C."/>
            <person name="Kodzius R."/>
            <person name="Shimokawa K."/>
            <person name="Bajic V.B."/>
            <person name="Brenner S.E."/>
            <person name="Batalov S."/>
            <person name="Forrest A.R."/>
            <person name="Zavolan M."/>
            <person name="Davis M.J."/>
            <person name="Wilming L.G."/>
            <person name="Aidinis V."/>
            <person name="Allen J.E."/>
            <person name="Ambesi-Impiombato A."/>
            <person name="Apweiler R."/>
            <person name="Aturaliya R.N."/>
            <person name="Bailey T.L."/>
            <person name="Bansal M."/>
            <person name="Baxter L."/>
            <person name="Beisel K.W."/>
            <person name="Bersano T."/>
            <person name="Bono H."/>
            <person name="Chalk A.M."/>
            <person name="Chiu K.P."/>
            <person name="Choudhary V."/>
            <person name="Christoffels A."/>
            <person name="Clutterbuck D.R."/>
            <person name="Crowe M.L."/>
            <person name="Dalla E."/>
            <person name="Dalrymple B.P."/>
            <person name="de Bono B."/>
            <person name="Della Gatta G."/>
            <person name="di Bernardo D."/>
            <person name="Down T."/>
            <person name="Engstrom P."/>
            <person name="Fagiolini M."/>
            <person name="Faulkner G."/>
            <person name="Fletcher C.F."/>
            <person name="Fukushima T."/>
            <person name="Furuno M."/>
            <person name="Futaki S."/>
            <person name="Gariboldi M."/>
            <person name="Georgii-Hemming P."/>
            <person name="Gingeras T.R."/>
            <person name="Gojobori T."/>
            <person name="Green R.E."/>
            <person name="Gustincich S."/>
            <person name="Harbers M."/>
            <person name="Hayashi Y."/>
            <person name="Hensch T.K."/>
            <person name="Hirokawa N."/>
            <person name="Hill D."/>
            <person name="Huminiecki L."/>
            <person name="Iacono M."/>
            <person name="Ikeo K."/>
            <person name="Iwama A."/>
            <person name="Ishikawa T."/>
            <person name="Jakt M."/>
            <person name="Kanapin A."/>
            <person name="Katoh M."/>
            <person name="Kawasawa Y."/>
            <person name="Kelso J."/>
            <person name="Kitamura H."/>
            <person name="Kitano H."/>
            <person name="Kollias G."/>
            <person name="Krishnan S.P."/>
            <person name="Kruger A."/>
            <person name="Kummerfeld S.K."/>
            <person name="Kurochkin I.V."/>
            <person name="Lareau L.F."/>
            <person name="Lazarevic D."/>
            <person name="Lipovich L."/>
            <person name="Liu J."/>
            <person name="Liuni S."/>
            <person name="McWilliam S."/>
            <person name="Madan Babu M."/>
            <person name="Madera M."/>
            <person name="Marchionni L."/>
            <person name="Matsuda H."/>
            <person name="Matsuzawa S."/>
            <person name="Miki H."/>
            <person name="Mignone F."/>
            <person name="Miyake S."/>
            <person name="Morris K."/>
            <person name="Mottagui-Tabar S."/>
            <person name="Mulder N."/>
            <person name="Nakano N."/>
            <person name="Nakauchi H."/>
            <person name="Ng P."/>
            <person name="Nilsson R."/>
            <person name="Nishiguchi S."/>
            <person name="Nishikawa S."/>
            <person name="Nori F."/>
            <person name="Ohara O."/>
            <person name="Okazaki Y."/>
            <person name="Orlando V."/>
            <person name="Pang K.C."/>
            <person name="Pavan W.J."/>
            <person name="Pavesi G."/>
            <person name="Pesole G."/>
            <person name="Petrovsky N."/>
            <person name="Piazza S."/>
            <person name="Reed J."/>
            <person name="Reid J.F."/>
            <person name="Ring B.Z."/>
            <person name="Ringwald M."/>
            <person name="Rost B."/>
            <person name="Ruan Y."/>
            <person name="Salzberg S.L."/>
            <person name="Sandelin A."/>
            <person name="Schneider C."/>
            <person name="Schoenbach C."/>
            <person name="Sekiguchi K."/>
            <person name="Semple C.A."/>
            <person name="Seno S."/>
            <person name="Sessa L."/>
            <person name="Sheng Y."/>
            <person name="Shibata Y."/>
            <person name="Shimada H."/>
            <person name="Shimada K."/>
            <person name="Silva D."/>
            <person name="Sinclair B."/>
            <person name="Sperling S."/>
            <person name="Stupka E."/>
            <person name="Sugiura K."/>
            <person name="Sultana R."/>
            <person name="Takenaka Y."/>
            <person name="Taki K."/>
            <person name="Tammoja K."/>
            <person name="Tan S.L."/>
            <person name="Tang S."/>
            <person name="Taylor M.S."/>
            <person name="Tegner J."/>
            <person name="Teichmann S.A."/>
            <person name="Ueda H.R."/>
            <person name="van Nimwegen E."/>
            <person name="Verardo R."/>
            <person name="Wei C.L."/>
            <person name="Yagi K."/>
            <person name="Yamanishi H."/>
            <person name="Zabarovsky E."/>
            <person name="Zhu S."/>
            <person name="Zimmer A."/>
            <person name="Hide W."/>
            <person name="Bult C."/>
            <person name="Grimmond S.M."/>
            <person name="Teasdale R.D."/>
            <person name="Liu E.T."/>
            <person name="Brusic V."/>
            <person name="Quackenbush J."/>
            <person name="Wahlestedt C."/>
            <person name="Mattick J.S."/>
            <person name="Hume D.A."/>
            <person name="Kai C."/>
            <person name="Sasaki D."/>
            <person name="Tomaru Y."/>
            <person name="Fukuda S."/>
            <person name="Kanamori-Katayama M."/>
            <person name="Suzuki M."/>
            <person name="Aoki J."/>
            <person name="Arakawa T."/>
            <person name="Iida J."/>
            <person name="Imamura K."/>
            <person name="Itoh M."/>
            <person name="Kato T."/>
            <person name="Kawaji H."/>
            <person name="Kawagashira N."/>
            <person name="Kawashima T."/>
            <person name="Kojima M."/>
            <person name="Kondo S."/>
            <person name="Konno H."/>
            <person name="Nakano K."/>
            <person name="Ninomiya N."/>
            <person name="Nishio T."/>
            <person name="Okada M."/>
            <person name="Plessy C."/>
            <person name="Shibata K."/>
            <person name="Shiraki T."/>
            <person name="Suzuki S."/>
            <person name="Tagami M."/>
            <person name="Waki K."/>
            <person name="Watahiki A."/>
            <person name="Okamura-Oho Y."/>
            <person name="Suzuki H."/>
            <person name="Kawai J."/>
            <person name="Hayashizaki Y."/>
        </authorList>
    </citation>
    <scope>NUCLEOTIDE SEQUENCE [LARGE SCALE MRNA]</scope>
    <source>
        <strain>C57BL/6J</strain>
        <tissue>Hypothalamus</tissue>
    </source>
</reference>
<reference key="3">
    <citation type="submission" date="2005-07" db="EMBL/GenBank/DDBJ databases">
        <authorList>
            <person name="Mural R.J."/>
            <person name="Adams M.D."/>
            <person name="Myers E.W."/>
            <person name="Smith H.O."/>
            <person name="Venter J.C."/>
        </authorList>
    </citation>
    <scope>NUCLEOTIDE SEQUENCE [LARGE SCALE GENOMIC DNA]</scope>
</reference>
<reference key="4">
    <citation type="journal article" date="2004" name="Genome Res.">
        <title>The status, quality, and expansion of the NIH full-length cDNA project: the Mammalian Gene Collection (MGC).</title>
        <authorList>
            <consortium name="The MGC Project Team"/>
        </authorList>
    </citation>
    <scope>NUCLEOTIDE SEQUENCE [LARGE SCALE MRNA]</scope>
    <source>
        <strain>C57BL/6J</strain>
        <tissue>Brain</tissue>
    </source>
</reference>
<reference key="5">
    <citation type="journal article" date="1994" name="J. Immunol.">
        <title>Molecular evidence that granuloma T lymphocytes in murine schistosomiasis mansoni express an authentic substance P (NK-1) receptor.</title>
        <authorList>
            <person name="Cook G.A."/>
            <person name="Elliott D."/>
            <person name="Metwali A."/>
            <person name="Blum A.M."/>
            <person name="Sandor M."/>
            <person name="Lynch R."/>
            <person name="Weinstock J.V."/>
        </authorList>
    </citation>
    <scope>NUCLEOTIDE SEQUENCE [MRNA] OF 63-290</scope>
    <source>
        <strain>CBA/J</strain>
        <tissue>Brain</tissue>
        <tissue>T-cell</tissue>
    </source>
</reference>
<name>NK1R_MOUSE</name>
<dbReference type="EMBL" id="X62934">
    <property type="protein sequence ID" value="CAA44707.1"/>
    <property type="molecule type" value="mRNA"/>
</dbReference>
<dbReference type="EMBL" id="AK038558">
    <property type="protein sequence ID" value="BAC30042.1"/>
    <property type="molecule type" value="mRNA"/>
</dbReference>
<dbReference type="EMBL" id="CH466523">
    <property type="protein sequence ID" value="EDK99033.1"/>
    <property type="molecule type" value="Genomic_DNA"/>
</dbReference>
<dbReference type="EMBL" id="BC075631">
    <property type="protein sequence ID" value="AAH75631.1"/>
    <property type="molecule type" value="mRNA"/>
</dbReference>
<dbReference type="EMBL" id="BC098332">
    <property type="protein sequence ID" value="AAH98332.1"/>
    <property type="molecule type" value="mRNA"/>
</dbReference>
<dbReference type="EMBL" id="L27828">
    <property type="protein sequence ID" value="AAA17892.1"/>
    <property type="molecule type" value="mRNA"/>
</dbReference>
<dbReference type="EMBL" id="L27826">
    <property type="protein sequence ID" value="AAA17891.1"/>
    <property type="molecule type" value="mRNA"/>
</dbReference>
<dbReference type="CCDS" id="CCDS20262.1"/>
<dbReference type="PIR" id="S20304">
    <property type="entry name" value="S20304"/>
</dbReference>
<dbReference type="RefSeq" id="NP_033339.2">
    <property type="nucleotide sequence ID" value="NM_009313.5"/>
</dbReference>
<dbReference type="RefSeq" id="XP_006505926.1">
    <property type="nucleotide sequence ID" value="XM_006505863.4"/>
</dbReference>
<dbReference type="RefSeq" id="XP_006505927.1">
    <property type="nucleotide sequence ID" value="XM_006505864.5"/>
</dbReference>
<dbReference type="RefSeq" id="XP_006505928.1">
    <property type="nucleotide sequence ID" value="XM_006505865.4"/>
</dbReference>
<dbReference type="SMR" id="P30548"/>
<dbReference type="FunCoup" id="P30548">
    <property type="interactions" value="667"/>
</dbReference>
<dbReference type="STRING" id="10090.ENSMUSP00000032122"/>
<dbReference type="BindingDB" id="P30548"/>
<dbReference type="ChEMBL" id="CHEMBL2668"/>
<dbReference type="GlyCosmos" id="P30548">
    <property type="glycosylation" value="2 sites, No reported glycans"/>
</dbReference>
<dbReference type="GlyGen" id="P30548">
    <property type="glycosylation" value="3 sites"/>
</dbReference>
<dbReference type="PhosphoSitePlus" id="P30548"/>
<dbReference type="SwissPalm" id="P30548"/>
<dbReference type="PaxDb" id="10090-ENSMUSP00000032122"/>
<dbReference type="ProteomicsDB" id="293851"/>
<dbReference type="Antibodypedia" id="16803">
    <property type="antibodies" value="576 antibodies from 40 providers"/>
</dbReference>
<dbReference type="Ensembl" id="ENSMUST00000032122.11">
    <property type="protein sequence ID" value="ENSMUSP00000032122.8"/>
    <property type="gene ID" value="ENSMUSG00000030043.12"/>
</dbReference>
<dbReference type="Ensembl" id="ENSMUST00000203775.2">
    <property type="protein sequence ID" value="ENSMUSP00000145217.2"/>
    <property type="gene ID" value="ENSMUSG00000030043.12"/>
</dbReference>
<dbReference type="GeneID" id="21336"/>
<dbReference type="KEGG" id="mmu:21336"/>
<dbReference type="UCSC" id="uc009clh.2">
    <property type="organism name" value="mouse"/>
</dbReference>
<dbReference type="AGR" id="MGI:98475"/>
<dbReference type="CTD" id="6869"/>
<dbReference type="MGI" id="MGI:98475">
    <property type="gene designation" value="Tacr1"/>
</dbReference>
<dbReference type="VEuPathDB" id="HostDB:ENSMUSG00000030043"/>
<dbReference type="eggNOG" id="KOG4219">
    <property type="taxonomic scope" value="Eukaryota"/>
</dbReference>
<dbReference type="GeneTree" id="ENSGT00940000153745"/>
<dbReference type="HOGENOM" id="CLU_009579_6_1_1"/>
<dbReference type="InParanoid" id="P30548"/>
<dbReference type="OMA" id="CMIKWPE"/>
<dbReference type="OrthoDB" id="5981855at2759"/>
<dbReference type="PhylomeDB" id="P30548"/>
<dbReference type="TreeFam" id="TF315303"/>
<dbReference type="Reactome" id="R-MMU-380095">
    <property type="pathway name" value="Tachykinin receptors bind tachykinins"/>
</dbReference>
<dbReference type="Reactome" id="R-MMU-416476">
    <property type="pathway name" value="G alpha (q) signalling events"/>
</dbReference>
<dbReference type="Reactome" id="R-MMU-8856825">
    <property type="pathway name" value="Cargo recognition for clathrin-mediated endocytosis"/>
</dbReference>
<dbReference type="Reactome" id="R-MMU-8856828">
    <property type="pathway name" value="Clathrin-mediated endocytosis"/>
</dbReference>
<dbReference type="BioGRID-ORCS" id="21336">
    <property type="hits" value="4 hits in 76 CRISPR screens"/>
</dbReference>
<dbReference type="PRO" id="PR:P30548"/>
<dbReference type="Proteomes" id="UP000000589">
    <property type="component" value="Chromosome 6"/>
</dbReference>
<dbReference type="RNAct" id="P30548">
    <property type="molecule type" value="protein"/>
</dbReference>
<dbReference type="Bgee" id="ENSMUSG00000030043">
    <property type="expression patterns" value="Expressed in kidney vasculature and 49 other cell types or tissues"/>
</dbReference>
<dbReference type="GO" id="GO:0044297">
    <property type="term" value="C:cell body"/>
    <property type="evidence" value="ECO:0007669"/>
    <property type="project" value="Ensembl"/>
</dbReference>
<dbReference type="GO" id="GO:0071944">
    <property type="term" value="C:cell periphery"/>
    <property type="evidence" value="ECO:0000314"/>
    <property type="project" value="MGI"/>
</dbReference>
<dbReference type="GO" id="GO:0009986">
    <property type="term" value="C:cell surface"/>
    <property type="evidence" value="ECO:0007669"/>
    <property type="project" value="Ensembl"/>
</dbReference>
<dbReference type="GO" id="GO:0030425">
    <property type="term" value="C:dendrite"/>
    <property type="evidence" value="ECO:0007669"/>
    <property type="project" value="Ensembl"/>
</dbReference>
<dbReference type="GO" id="GO:0045211">
    <property type="term" value="C:postsynaptic membrane"/>
    <property type="evidence" value="ECO:0007669"/>
    <property type="project" value="Ensembl"/>
</dbReference>
<dbReference type="GO" id="GO:0061827">
    <property type="term" value="C:sperm head"/>
    <property type="evidence" value="ECO:0007669"/>
    <property type="project" value="Ensembl"/>
</dbReference>
<dbReference type="GO" id="GO:0097225">
    <property type="term" value="C:sperm midpiece"/>
    <property type="evidence" value="ECO:0007669"/>
    <property type="project" value="Ensembl"/>
</dbReference>
<dbReference type="GO" id="GO:0016496">
    <property type="term" value="F:substance P receptor activity"/>
    <property type="evidence" value="ECO:0007669"/>
    <property type="project" value="Ensembl"/>
</dbReference>
<dbReference type="GO" id="GO:0002118">
    <property type="term" value="P:aggressive behavior"/>
    <property type="evidence" value="ECO:0007669"/>
    <property type="project" value="Ensembl"/>
</dbReference>
<dbReference type="GO" id="GO:0003051">
    <property type="term" value="P:angiotensin-mediated drinking behavior"/>
    <property type="evidence" value="ECO:0007669"/>
    <property type="project" value="Ensembl"/>
</dbReference>
<dbReference type="GO" id="GO:0008306">
    <property type="term" value="P:associative learning"/>
    <property type="evidence" value="ECO:0007669"/>
    <property type="project" value="Ensembl"/>
</dbReference>
<dbReference type="GO" id="GO:0048266">
    <property type="term" value="P:behavioral response to pain"/>
    <property type="evidence" value="ECO:0007669"/>
    <property type="project" value="Ensembl"/>
</dbReference>
<dbReference type="GO" id="GO:0042755">
    <property type="term" value="P:eating behavior"/>
    <property type="evidence" value="ECO:0007669"/>
    <property type="project" value="Ensembl"/>
</dbReference>
<dbReference type="GO" id="GO:0007616">
    <property type="term" value="P:long-term memory"/>
    <property type="evidence" value="ECO:0007669"/>
    <property type="project" value="Ensembl"/>
</dbReference>
<dbReference type="GO" id="GO:0035106">
    <property type="term" value="P:operant conditioning"/>
    <property type="evidence" value="ECO:0007669"/>
    <property type="project" value="Ensembl"/>
</dbReference>
<dbReference type="GO" id="GO:0045760">
    <property type="term" value="P:positive regulation of action potential"/>
    <property type="evidence" value="ECO:0007669"/>
    <property type="project" value="Ensembl"/>
</dbReference>
<dbReference type="GO" id="GO:0045777">
    <property type="term" value="P:positive regulation of blood pressure"/>
    <property type="evidence" value="ECO:0007669"/>
    <property type="project" value="Ensembl"/>
</dbReference>
<dbReference type="GO" id="GO:0007204">
    <property type="term" value="P:positive regulation of cytosolic calcium ion concentration"/>
    <property type="evidence" value="ECO:0007669"/>
    <property type="project" value="Ensembl"/>
</dbReference>
<dbReference type="GO" id="GO:0010634">
    <property type="term" value="P:positive regulation of epithelial cell migration"/>
    <property type="evidence" value="ECO:0007669"/>
    <property type="project" value="Ensembl"/>
</dbReference>
<dbReference type="GO" id="GO:0050679">
    <property type="term" value="P:positive regulation of epithelial cell proliferation"/>
    <property type="evidence" value="ECO:0007669"/>
    <property type="project" value="Ensembl"/>
</dbReference>
<dbReference type="GO" id="GO:1902093">
    <property type="term" value="P:positive regulation of flagellated sperm motility"/>
    <property type="evidence" value="ECO:0007669"/>
    <property type="project" value="Ensembl"/>
</dbReference>
<dbReference type="GO" id="GO:0046887">
    <property type="term" value="P:positive regulation of hormone secretion"/>
    <property type="evidence" value="ECO:0007669"/>
    <property type="project" value="Ensembl"/>
</dbReference>
<dbReference type="GO" id="GO:0002687">
    <property type="term" value="P:positive regulation of leukocyte migration"/>
    <property type="evidence" value="ECO:0007669"/>
    <property type="project" value="Ensembl"/>
</dbReference>
<dbReference type="GO" id="GO:0050671">
    <property type="term" value="P:positive regulation of lymphocyte proliferation"/>
    <property type="evidence" value="ECO:0007669"/>
    <property type="project" value="Ensembl"/>
</dbReference>
<dbReference type="GO" id="GO:0045778">
    <property type="term" value="P:positive regulation of ossification"/>
    <property type="evidence" value="ECO:0007669"/>
    <property type="project" value="Ensembl"/>
</dbReference>
<dbReference type="GO" id="GO:0051496">
    <property type="term" value="P:positive regulation of stress fiber assembly"/>
    <property type="evidence" value="ECO:0007669"/>
    <property type="project" value="Ensembl"/>
</dbReference>
<dbReference type="GO" id="GO:0032224">
    <property type="term" value="P:positive regulation of synaptic transmission, cholinergic"/>
    <property type="evidence" value="ECO:0007669"/>
    <property type="project" value="Ensembl"/>
</dbReference>
<dbReference type="GO" id="GO:0032230">
    <property type="term" value="P:positive regulation of synaptic transmission, GABAergic"/>
    <property type="evidence" value="ECO:0007669"/>
    <property type="project" value="Ensembl"/>
</dbReference>
<dbReference type="GO" id="GO:0070474">
    <property type="term" value="P:positive regulation of uterine smooth muscle contraction"/>
    <property type="evidence" value="ECO:0007669"/>
    <property type="project" value="Ensembl"/>
</dbReference>
<dbReference type="GO" id="GO:0043117">
    <property type="term" value="P:positive regulation of vascular permeability"/>
    <property type="evidence" value="ECO:0007669"/>
    <property type="project" value="Ensembl"/>
</dbReference>
<dbReference type="GO" id="GO:0045907">
    <property type="term" value="P:positive regulation of vasoconstriction"/>
    <property type="evidence" value="ECO:0007669"/>
    <property type="project" value="Ensembl"/>
</dbReference>
<dbReference type="GO" id="GO:0014910">
    <property type="term" value="P:regulation of smooth muscle cell migration"/>
    <property type="evidence" value="ECO:0007669"/>
    <property type="project" value="Ensembl"/>
</dbReference>
<dbReference type="GO" id="GO:0048660">
    <property type="term" value="P:regulation of smooth muscle cell proliferation"/>
    <property type="evidence" value="ECO:0007669"/>
    <property type="project" value="Ensembl"/>
</dbReference>
<dbReference type="GO" id="GO:0070472">
    <property type="term" value="P:regulation of uterine smooth muscle contraction"/>
    <property type="evidence" value="ECO:0000314"/>
    <property type="project" value="CACAO"/>
</dbReference>
<dbReference type="GO" id="GO:0010996">
    <property type="term" value="P:response to auditory stimulus"/>
    <property type="evidence" value="ECO:0007669"/>
    <property type="project" value="Ensembl"/>
</dbReference>
<dbReference type="GO" id="GO:0051602">
    <property type="term" value="P:response to electrical stimulus"/>
    <property type="evidence" value="ECO:0007669"/>
    <property type="project" value="Ensembl"/>
</dbReference>
<dbReference type="GO" id="GO:0032355">
    <property type="term" value="P:response to estradiol"/>
    <property type="evidence" value="ECO:0007669"/>
    <property type="project" value="Ensembl"/>
</dbReference>
<dbReference type="GO" id="GO:0045471">
    <property type="term" value="P:response to ethanol"/>
    <property type="evidence" value="ECO:0007669"/>
    <property type="project" value="Ensembl"/>
</dbReference>
<dbReference type="GO" id="GO:0035094">
    <property type="term" value="P:response to nicotine"/>
    <property type="evidence" value="ECO:0007669"/>
    <property type="project" value="Ensembl"/>
</dbReference>
<dbReference type="GO" id="GO:0010193">
    <property type="term" value="P:response to ozone"/>
    <property type="evidence" value="ECO:0007669"/>
    <property type="project" value="Ensembl"/>
</dbReference>
<dbReference type="GO" id="GO:0048265">
    <property type="term" value="P:response to pain"/>
    <property type="evidence" value="ECO:0000315"/>
    <property type="project" value="MGI"/>
</dbReference>
<dbReference type="GO" id="GO:0032570">
    <property type="term" value="P:response to progesterone"/>
    <property type="evidence" value="ECO:0007669"/>
    <property type="project" value="Ensembl"/>
</dbReference>
<dbReference type="GO" id="GO:0060083">
    <property type="term" value="P:smooth muscle contraction involved in micturition"/>
    <property type="evidence" value="ECO:0007669"/>
    <property type="project" value="Ensembl"/>
</dbReference>
<dbReference type="GO" id="GO:0042713">
    <property type="term" value="P:sperm ejaculation"/>
    <property type="evidence" value="ECO:0007669"/>
    <property type="project" value="Ensembl"/>
</dbReference>
<dbReference type="FunFam" id="1.20.1070.10:FF:000078">
    <property type="entry name" value="Neuromedin-K receptor"/>
    <property type="match status" value="1"/>
</dbReference>
<dbReference type="Gene3D" id="1.20.1070.10">
    <property type="entry name" value="Rhodopsin 7-helix transmembrane proteins"/>
    <property type="match status" value="1"/>
</dbReference>
<dbReference type="InterPro" id="IPR000276">
    <property type="entry name" value="GPCR_Rhodpsn"/>
</dbReference>
<dbReference type="InterPro" id="IPR017452">
    <property type="entry name" value="GPCR_Rhodpsn_7TM"/>
</dbReference>
<dbReference type="InterPro" id="IPR001681">
    <property type="entry name" value="Neurokn_rcpt"/>
</dbReference>
<dbReference type="InterPro" id="IPR000046">
    <property type="entry name" value="NK1_rcpt"/>
</dbReference>
<dbReference type="PANTHER" id="PTHR46925">
    <property type="entry name" value="G-PROTEIN COUPLED RECEPTOR TKR-1-RELATED"/>
    <property type="match status" value="1"/>
</dbReference>
<dbReference type="PANTHER" id="PTHR46925:SF4">
    <property type="entry name" value="SUBSTANCE-P RECEPTOR"/>
    <property type="match status" value="1"/>
</dbReference>
<dbReference type="Pfam" id="PF00001">
    <property type="entry name" value="7tm_1"/>
    <property type="match status" value="1"/>
</dbReference>
<dbReference type="PRINTS" id="PR00237">
    <property type="entry name" value="GPCRRHODOPSN"/>
</dbReference>
<dbReference type="PRINTS" id="PR01024">
    <property type="entry name" value="NEUROKININ1R"/>
</dbReference>
<dbReference type="PRINTS" id="PR00244">
    <property type="entry name" value="NEUROKININR"/>
</dbReference>
<dbReference type="SMART" id="SM01381">
    <property type="entry name" value="7TM_GPCR_Srsx"/>
    <property type="match status" value="1"/>
</dbReference>
<dbReference type="SUPFAM" id="SSF81321">
    <property type="entry name" value="Family A G protein-coupled receptor-like"/>
    <property type="match status" value="1"/>
</dbReference>
<dbReference type="PROSITE" id="PS00237">
    <property type="entry name" value="G_PROTEIN_RECEP_F1_1"/>
    <property type="match status" value="1"/>
</dbReference>
<dbReference type="PROSITE" id="PS50262">
    <property type="entry name" value="G_PROTEIN_RECEP_F1_2"/>
    <property type="match status" value="1"/>
</dbReference>
<proteinExistence type="evidence at transcript level"/>
<feature type="chain" id="PRO_0000069887" description="Substance-P receptor">
    <location>
        <begin position="1"/>
        <end position="407"/>
    </location>
</feature>
<feature type="topological domain" description="Extracellular" evidence="2">
    <location>
        <begin position="1"/>
        <end position="31"/>
    </location>
</feature>
<feature type="transmembrane region" description="Helical; Name=1" evidence="2">
    <location>
        <begin position="32"/>
        <end position="54"/>
    </location>
</feature>
<feature type="topological domain" description="Cytoplasmic" evidence="2">
    <location>
        <begin position="55"/>
        <end position="64"/>
    </location>
</feature>
<feature type="transmembrane region" description="Helical; Name=2" evidence="2">
    <location>
        <begin position="65"/>
        <end position="86"/>
    </location>
</feature>
<feature type="topological domain" description="Extracellular" evidence="2">
    <location>
        <begin position="87"/>
        <end position="106"/>
    </location>
</feature>
<feature type="transmembrane region" description="Helical; Name=3" evidence="2">
    <location>
        <begin position="107"/>
        <end position="128"/>
    </location>
</feature>
<feature type="topological domain" description="Cytoplasmic" evidence="2">
    <location>
        <begin position="129"/>
        <end position="148"/>
    </location>
</feature>
<feature type="transmembrane region" description="Helical; Name=4" evidence="2">
    <location>
        <begin position="149"/>
        <end position="169"/>
    </location>
</feature>
<feature type="topological domain" description="Extracellular" evidence="2">
    <location>
        <begin position="170"/>
        <end position="194"/>
    </location>
</feature>
<feature type="transmembrane region" description="Helical; Name=5" evidence="2">
    <location>
        <begin position="195"/>
        <end position="219"/>
    </location>
</feature>
<feature type="topological domain" description="Cytoplasmic" evidence="2">
    <location>
        <begin position="220"/>
        <end position="248"/>
    </location>
</feature>
<feature type="transmembrane region" description="Helical; Name=6" evidence="2">
    <location>
        <begin position="249"/>
        <end position="270"/>
    </location>
</feature>
<feature type="topological domain" description="Extracellular" evidence="2">
    <location>
        <begin position="271"/>
        <end position="283"/>
    </location>
</feature>
<feature type="transmembrane region" description="Helical; Name=7" evidence="2">
    <location>
        <begin position="284"/>
        <end position="308"/>
    </location>
</feature>
<feature type="topological domain" description="Cytoplasmic" evidence="2">
    <location>
        <begin position="309"/>
        <end position="407"/>
    </location>
</feature>
<feature type="region of interest" description="Disordered" evidence="4">
    <location>
        <begin position="1"/>
        <end position="20"/>
    </location>
</feature>
<feature type="region of interest" description="Disordered" evidence="4">
    <location>
        <begin position="362"/>
        <end position="407"/>
    </location>
</feature>
<feature type="compositionally biased region" description="Polar residues" evidence="4">
    <location>
        <begin position="376"/>
        <end position="407"/>
    </location>
</feature>
<feature type="lipid moiety-binding region" description="S-palmitoyl cysteine" evidence="2">
    <location>
        <position position="322"/>
    </location>
</feature>
<feature type="glycosylation site" description="N-linked (GlcNAc...) asparagine" evidence="2">
    <location>
        <position position="14"/>
    </location>
</feature>
<feature type="glycosylation site" description="N-linked (GlcNAc...) asparagine" evidence="2">
    <location>
        <position position="18"/>
    </location>
</feature>
<feature type="disulfide bond" evidence="3">
    <location>
        <begin position="105"/>
        <end position="180"/>
    </location>
</feature>
<feature type="sequence conflict" description="In Ref. 1; CAA44707." evidence="5" ref="1">
    <original>M</original>
    <variation>I</variation>
    <location>
        <position position="405"/>
    </location>
</feature>
<evidence type="ECO:0000250" key="1"/>
<evidence type="ECO:0000255" key="2"/>
<evidence type="ECO:0000255" key="3">
    <source>
        <dbReference type="PROSITE-ProRule" id="PRU00521"/>
    </source>
</evidence>
<evidence type="ECO:0000256" key="4">
    <source>
        <dbReference type="SAM" id="MobiDB-lite"/>
    </source>
</evidence>
<evidence type="ECO:0000305" key="5"/>